<comment type="function">
    <text evidence="1">Catalyzes the initial step of the lipid cycle reactions in the biosynthesis of the cell wall peptidoglycan: transfers peptidoglycan precursor phospho-MurNAc-pentapeptide from UDP-MurNAc-pentapeptide onto the lipid carrier undecaprenyl phosphate, yielding undecaprenyl-pyrophosphoryl-MurNAc-pentapeptide, known as lipid I.</text>
</comment>
<comment type="catalytic activity">
    <reaction evidence="1">
        <text>UDP-N-acetyl-alpha-D-muramoyl-L-alanyl-gamma-D-glutamyl-meso-2,6-diaminopimeloyl-D-alanyl-D-alanine + di-trans,octa-cis-undecaprenyl phosphate = di-trans,octa-cis-undecaprenyl diphospho-N-acetyl-alpha-D-muramoyl-L-alanyl-D-glutamyl-meso-2,6-diaminopimeloyl-D-alanyl-D-alanine + UMP</text>
        <dbReference type="Rhea" id="RHEA:28386"/>
        <dbReference type="ChEBI" id="CHEBI:57865"/>
        <dbReference type="ChEBI" id="CHEBI:60392"/>
        <dbReference type="ChEBI" id="CHEBI:61386"/>
        <dbReference type="ChEBI" id="CHEBI:61387"/>
        <dbReference type="EC" id="2.7.8.13"/>
    </reaction>
</comment>
<comment type="cofactor">
    <cofactor evidence="1">
        <name>Mg(2+)</name>
        <dbReference type="ChEBI" id="CHEBI:18420"/>
    </cofactor>
</comment>
<comment type="pathway">
    <text evidence="1">Cell wall biogenesis; peptidoglycan biosynthesis.</text>
</comment>
<comment type="subcellular location">
    <subcellularLocation>
        <location evidence="1">Cell membrane</location>
        <topology evidence="1">Multi-pass membrane protein</topology>
    </subcellularLocation>
</comment>
<comment type="similarity">
    <text evidence="1">Belongs to the glycosyltransferase 4 family. MraY subfamily.</text>
</comment>
<dbReference type="EC" id="2.7.8.13" evidence="1"/>
<dbReference type="EMBL" id="CP000568">
    <property type="protein sequence ID" value="ABN52208.1"/>
    <property type="molecule type" value="Genomic_DNA"/>
</dbReference>
<dbReference type="SMR" id="A3DE29"/>
<dbReference type="STRING" id="203119.Cthe_0976"/>
<dbReference type="KEGG" id="cth:Cthe_0976"/>
<dbReference type="eggNOG" id="COG0472">
    <property type="taxonomic scope" value="Bacteria"/>
</dbReference>
<dbReference type="HOGENOM" id="CLU_023982_0_0_9"/>
<dbReference type="UniPathway" id="UPA00219"/>
<dbReference type="Proteomes" id="UP000002145">
    <property type="component" value="Chromosome"/>
</dbReference>
<dbReference type="GO" id="GO:0005886">
    <property type="term" value="C:plasma membrane"/>
    <property type="evidence" value="ECO:0007669"/>
    <property type="project" value="UniProtKB-SubCell"/>
</dbReference>
<dbReference type="GO" id="GO:0046872">
    <property type="term" value="F:metal ion binding"/>
    <property type="evidence" value="ECO:0007669"/>
    <property type="project" value="UniProtKB-KW"/>
</dbReference>
<dbReference type="GO" id="GO:0008963">
    <property type="term" value="F:phospho-N-acetylmuramoyl-pentapeptide-transferase activity"/>
    <property type="evidence" value="ECO:0007669"/>
    <property type="project" value="UniProtKB-UniRule"/>
</dbReference>
<dbReference type="GO" id="GO:0051992">
    <property type="term" value="F:UDP-N-acetylmuramoyl-L-alanyl-D-glutamyl-meso-2,6-diaminopimelyl-D-alanyl-D-alanine:undecaprenyl-phosphate transferase activity"/>
    <property type="evidence" value="ECO:0007669"/>
    <property type="project" value="RHEA"/>
</dbReference>
<dbReference type="GO" id="GO:0051301">
    <property type="term" value="P:cell division"/>
    <property type="evidence" value="ECO:0007669"/>
    <property type="project" value="UniProtKB-KW"/>
</dbReference>
<dbReference type="GO" id="GO:0071555">
    <property type="term" value="P:cell wall organization"/>
    <property type="evidence" value="ECO:0007669"/>
    <property type="project" value="UniProtKB-KW"/>
</dbReference>
<dbReference type="GO" id="GO:0009252">
    <property type="term" value="P:peptidoglycan biosynthetic process"/>
    <property type="evidence" value="ECO:0007669"/>
    <property type="project" value="UniProtKB-UniRule"/>
</dbReference>
<dbReference type="GO" id="GO:0008360">
    <property type="term" value="P:regulation of cell shape"/>
    <property type="evidence" value="ECO:0007669"/>
    <property type="project" value="UniProtKB-KW"/>
</dbReference>
<dbReference type="CDD" id="cd06852">
    <property type="entry name" value="GT_MraY"/>
    <property type="match status" value="1"/>
</dbReference>
<dbReference type="HAMAP" id="MF_00038">
    <property type="entry name" value="MraY"/>
    <property type="match status" value="1"/>
</dbReference>
<dbReference type="InterPro" id="IPR000715">
    <property type="entry name" value="Glycosyl_transferase_4"/>
</dbReference>
<dbReference type="InterPro" id="IPR003524">
    <property type="entry name" value="PNAcMuramoyl-5peptid_Trfase"/>
</dbReference>
<dbReference type="InterPro" id="IPR018480">
    <property type="entry name" value="PNAcMuramoyl-5peptid_Trfase_CS"/>
</dbReference>
<dbReference type="NCBIfam" id="TIGR00445">
    <property type="entry name" value="mraY"/>
    <property type="match status" value="1"/>
</dbReference>
<dbReference type="PANTHER" id="PTHR22926">
    <property type="entry name" value="PHOSPHO-N-ACETYLMURAMOYL-PENTAPEPTIDE-TRANSFERASE"/>
    <property type="match status" value="1"/>
</dbReference>
<dbReference type="PANTHER" id="PTHR22926:SF5">
    <property type="entry name" value="PHOSPHO-N-ACETYLMURAMOYL-PENTAPEPTIDE-TRANSFERASE HOMOLOG"/>
    <property type="match status" value="1"/>
</dbReference>
<dbReference type="Pfam" id="PF00953">
    <property type="entry name" value="Glycos_transf_4"/>
    <property type="match status" value="1"/>
</dbReference>
<dbReference type="PROSITE" id="PS01348">
    <property type="entry name" value="MRAY_2"/>
    <property type="match status" value="1"/>
</dbReference>
<gene>
    <name evidence="1" type="primary">mraY</name>
    <name type="ordered locus">Cthe_0976</name>
</gene>
<accession>A3DE29</accession>
<evidence type="ECO:0000255" key="1">
    <source>
        <dbReference type="HAMAP-Rule" id="MF_00038"/>
    </source>
</evidence>
<proteinExistence type="inferred from homology"/>
<reference key="1">
    <citation type="submission" date="2007-02" db="EMBL/GenBank/DDBJ databases">
        <title>Complete sequence of Clostridium thermocellum ATCC 27405.</title>
        <authorList>
            <consortium name="US DOE Joint Genome Institute"/>
            <person name="Copeland A."/>
            <person name="Lucas S."/>
            <person name="Lapidus A."/>
            <person name="Barry K."/>
            <person name="Detter J.C."/>
            <person name="Glavina del Rio T."/>
            <person name="Hammon N."/>
            <person name="Israni S."/>
            <person name="Dalin E."/>
            <person name="Tice H."/>
            <person name="Pitluck S."/>
            <person name="Chertkov O."/>
            <person name="Brettin T."/>
            <person name="Bruce D."/>
            <person name="Han C."/>
            <person name="Tapia R."/>
            <person name="Gilna P."/>
            <person name="Schmutz J."/>
            <person name="Larimer F."/>
            <person name="Land M."/>
            <person name="Hauser L."/>
            <person name="Kyrpides N."/>
            <person name="Mikhailova N."/>
            <person name="Wu J.H.D."/>
            <person name="Newcomb M."/>
            <person name="Richardson P."/>
        </authorList>
    </citation>
    <scope>NUCLEOTIDE SEQUENCE [LARGE SCALE GENOMIC DNA]</scope>
    <source>
        <strain>ATCC 27405 / DSM 1237 / JCM 9322 / NBRC 103400 / NCIMB 10682 / NRRL B-4536 / VPI 7372</strain>
    </source>
</reference>
<keyword id="KW-0131">Cell cycle</keyword>
<keyword id="KW-0132">Cell division</keyword>
<keyword id="KW-1003">Cell membrane</keyword>
<keyword id="KW-0133">Cell shape</keyword>
<keyword id="KW-0961">Cell wall biogenesis/degradation</keyword>
<keyword id="KW-0460">Magnesium</keyword>
<keyword id="KW-0472">Membrane</keyword>
<keyword id="KW-0479">Metal-binding</keyword>
<keyword id="KW-0573">Peptidoglycan synthesis</keyword>
<keyword id="KW-1185">Reference proteome</keyword>
<keyword id="KW-0808">Transferase</keyword>
<keyword id="KW-0812">Transmembrane</keyword>
<keyword id="KW-1133">Transmembrane helix</keyword>
<protein>
    <recommendedName>
        <fullName evidence="1">Phospho-N-acetylmuramoyl-pentapeptide-transferase</fullName>
        <ecNumber evidence="1">2.7.8.13</ecNumber>
    </recommendedName>
    <alternativeName>
        <fullName evidence="1">UDP-MurNAc-pentapeptide phosphotransferase</fullName>
    </alternativeName>
</protein>
<sequence>MKLNLPFNISPHVFVFILSFAFSLILGPVLIPMLTRLKFGQTVRDDGPKTHYKKTGTPTMGGMIFLIPVTVLAAFYAGHDRRILPLIFVTLGFGLIGFIDDFIKVVKKRKDGLYWNQKMFGLLLVAVTFAVYLSHTHTSDIIIPFMGMDKTVSLGWLFVPFVVLVLIASTNAVNITDGLDGLAAGVTLIVTVFFTIVAMTRSEWEYIKMFSAMVAGGCLGFLTFNAYPARIFMGDTGSLALGGAVGAIAILMKMPLILLIVGGIYVVEALSVMIQVLSFKLTGKRVFKMAPIHHHFELSGWKEVKVVLVFWTITVLLCILGFFALRLKFY</sequence>
<organism>
    <name type="scientific">Acetivibrio thermocellus (strain ATCC 27405 / DSM 1237 / JCM 9322 / NBRC 103400 / NCIMB 10682 / NRRL B-4536 / VPI 7372)</name>
    <name type="common">Clostridium thermocellum</name>
    <dbReference type="NCBI Taxonomy" id="203119"/>
    <lineage>
        <taxon>Bacteria</taxon>
        <taxon>Bacillati</taxon>
        <taxon>Bacillota</taxon>
        <taxon>Clostridia</taxon>
        <taxon>Eubacteriales</taxon>
        <taxon>Oscillospiraceae</taxon>
        <taxon>Acetivibrio</taxon>
    </lineage>
</organism>
<feature type="chain" id="PRO_0000332533" description="Phospho-N-acetylmuramoyl-pentapeptide-transferase">
    <location>
        <begin position="1"/>
        <end position="330"/>
    </location>
</feature>
<feature type="transmembrane region" description="Helical" evidence="1">
    <location>
        <begin position="13"/>
        <end position="33"/>
    </location>
</feature>
<feature type="transmembrane region" description="Helical" evidence="1">
    <location>
        <begin position="58"/>
        <end position="78"/>
    </location>
</feature>
<feature type="transmembrane region" description="Helical" evidence="1">
    <location>
        <begin position="83"/>
        <end position="103"/>
    </location>
</feature>
<feature type="transmembrane region" description="Helical" evidence="1">
    <location>
        <begin position="113"/>
        <end position="133"/>
    </location>
</feature>
<feature type="transmembrane region" description="Helical" evidence="1">
    <location>
        <begin position="152"/>
        <end position="172"/>
    </location>
</feature>
<feature type="transmembrane region" description="Helical" evidence="1">
    <location>
        <begin position="179"/>
        <end position="199"/>
    </location>
</feature>
<feature type="transmembrane region" description="Helical" evidence="1">
    <location>
        <begin position="209"/>
        <end position="229"/>
    </location>
</feature>
<feature type="transmembrane region" description="Helical" evidence="1">
    <location>
        <begin position="231"/>
        <end position="250"/>
    </location>
</feature>
<feature type="transmembrane region" description="Helical" evidence="1">
    <location>
        <begin position="304"/>
        <end position="324"/>
    </location>
</feature>
<name>MRAY_ACET2</name>